<proteinExistence type="inferred from homology"/>
<keyword id="KW-0408">Iron</keyword>
<keyword id="KW-1185">Reference proteome</keyword>
<sequence>MSRTIFCTFLQREAEGQDFQLYPGELGKRIYNEISKEAWAQWQHKQTMLINEKKLNMMNAEHRKLLEQEMVNFLFEGKEVHIEGYTPEDKK</sequence>
<name>FETP_ECO24</name>
<dbReference type="EMBL" id="CP000800">
    <property type="protein sequence ID" value="ABV18130.1"/>
    <property type="molecule type" value="Genomic_DNA"/>
</dbReference>
<dbReference type="RefSeq" id="WP_000091700.1">
    <property type="nucleotide sequence ID" value="NC_009801.1"/>
</dbReference>
<dbReference type="BMRB" id="A7ZR88"/>
<dbReference type="SMR" id="A7ZR88"/>
<dbReference type="KEGG" id="ecw:EcE24377A_3308"/>
<dbReference type="HOGENOM" id="CLU_170994_0_0_6"/>
<dbReference type="Proteomes" id="UP000001122">
    <property type="component" value="Chromosome"/>
</dbReference>
<dbReference type="GO" id="GO:0005829">
    <property type="term" value="C:cytosol"/>
    <property type="evidence" value="ECO:0007669"/>
    <property type="project" value="TreeGrafter"/>
</dbReference>
<dbReference type="GO" id="GO:0005506">
    <property type="term" value="F:iron ion binding"/>
    <property type="evidence" value="ECO:0007669"/>
    <property type="project" value="UniProtKB-UniRule"/>
</dbReference>
<dbReference type="GO" id="GO:0034599">
    <property type="term" value="P:cellular response to oxidative stress"/>
    <property type="evidence" value="ECO:0007669"/>
    <property type="project" value="TreeGrafter"/>
</dbReference>
<dbReference type="FunFam" id="1.10.3880.10:FF:000001">
    <property type="entry name" value="Probable Fe(2+)-trafficking protein"/>
    <property type="match status" value="1"/>
</dbReference>
<dbReference type="Gene3D" id="1.10.3880.10">
    <property type="entry name" value="Fe(II) trafficking protein YggX"/>
    <property type="match status" value="1"/>
</dbReference>
<dbReference type="HAMAP" id="MF_00686">
    <property type="entry name" value="Fe_traffic_YggX"/>
    <property type="match status" value="1"/>
</dbReference>
<dbReference type="InterPro" id="IPR007457">
    <property type="entry name" value="Fe_traffick_prot_YggX"/>
</dbReference>
<dbReference type="InterPro" id="IPR036766">
    <property type="entry name" value="Fe_traffick_prot_YggX_sf"/>
</dbReference>
<dbReference type="NCBIfam" id="NF003817">
    <property type="entry name" value="PRK05408.1"/>
    <property type="match status" value="1"/>
</dbReference>
<dbReference type="PANTHER" id="PTHR36965">
    <property type="entry name" value="FE(2+)-TRAFFICKING PROTEIN-RELATED"/>
    <property type="match status" value="1"/>
</dbReference>
<dbReference type="PANTHER" id="PTHR36965:SF1">
    <property type="entry name" value="FE(2+)-TRAFFICKING PROTEIN-RELATED"/>
    <property type="match status" value="1"/>
</dbReference>
<dbReference type="Pfam" id="PF04362">
    <property type="entry name" value="Iron_traffic"/>
    <property type="match status" value="1"/>
</dbReference>
<dbReference type="PIRSF" id="PIRSF029827">
    <property type="entry name" value="Fe_traffic_YggX"/>
    <property type="match status" value="1"/>
</dbReference>
<dbReference type="SUPFAM" id="SSF111148">
    <property type="entry name" value="YggX-like"/>
    <property type="match status" value="1"/>
</dbReference>
<feature type="chain" id="PRO_1000061995" description="Probable Fe(2+)-trafficking protein">
    <location>
        <begin position="1"/>
        <end position="91"/>
    </location>
</feature>
<organism>
    <name type="scientific">Escherichia coli O139:H28 (strain E24377A / ETEC)</name>
    <dbReference type="NCBI Taxonomy" id="331111"/>
    <lineage>
        <taxon>Bacteria</taxon>
        <taxon>Pseudomonadati</taxon>
        <taxon>Pseudomonadota</taxon>
        <taxon>Gammaproteobacteria</taxon>
        <taxon>Enterobacterales</taxon>
        <taxon>Enterobacteriaceae</taxon>
        <taxon>Escherichia</taxon>
    </lineage>
</organism>
<accession>A7ZR88</accession>
<evidence type="ECO:0000255" key="1">
    <source>
        <dbReference type="HAMAP-Rule" id="MF_00686"/>
    </source>
</evidence>
<comment type="function">
    <text evidence="1">Could be a mediator in iron transactions between iron acquisition and iron-requiring processes, such as synthesis and/or repair of Fe-S clusters in biosynthetic enzymes.</text>
</comment>
<comment type="subunit">
    <text evidence="1">Monomer.</text>
</comment>
<comment type="similarity">
    <text evidence="1">Belongs to the Fe(2+)-trafficking protein family.</text>
</comment>
<reference key="1">
    <citation type="journal article" date="2008" name="J. Bacteriol.">
        <title>The pangenome structure of Escherichia coli: comparative genomic analysis of E. coli commensal and pathogenic isolates.</title>
        <authorList>
            <person name="Rasko D.A."/>
            <person name="Rosovitz M.J."/>
            <person name="Myers G.S.A."/>
            <person name="Mongodin E.F."/>
            <person name="Fricke W.F."/>
            <person name="Gajer P."/>
            <person name="Crabtree J."/>
            <person name="Sebaihia M."/>
            <person name="Thomson N.R."/>
            <person name="Chaudhuri R."/>
            <person name="Henderson I.R."/>
            <person name="Sperandio V."/>
            <person name="Ravel J."/>
        </authorList>
    </citation>
    <scope>NUCLEOTIDE SEQUENCE [LARGE SCALE GENOMIC DNA]</scope>
    <source>
        <strain>E24377A / ETEC</strain>
    </source>
</reference>
<gene>
    <name evidence="1" type="primary">yggX</name>
    <name type="ordered locus">EcE24377A_3308</name>
</gene>
<protein>
    <recommendedName>
        <fullName evidence="1">Probable Fe(2+)-trafficking protein</fullName>
    </recommendedName>
</protein>